<gene>
    <name type="primary">syrM2</name>
    <name type="ordered locus">NGR_a00470</name>
    <name type="ORF">y4zF</name>
</gene>
<protein>
    <recommendedName>
        <fullName>HTH-type transcriptional regulator SyrM 2</fullName>
    </recommendedName>
    <alternativeName>
        <fullName>Symbiotic regulator homolog 2</fullName>
    </alternativeName>
</protein>
<geneLocation type="plasmid">
    <name>sym pNGR234a</name>
</geneLocation>
<proteinExistence type="inferred from homology"/>
<reference key="1">
    <citation type="journal article" date="1997" name="Nature">
        <title>Molecular basis of symbiosis between Rhizobium and legumes.</title>
        <authorList>
            <person name="Freiberg C.A."/>
            <person name="Fellay R."/>
            <person name="Bairoch A."/>
            <person name="Broughton W.J."/>
            <person name="Rosenthal A."/>
            <person name="Perret X."/>
        </authorList>
    </citation>
    <scope>NUCLEOTIDE SEQUENCE [LARGE SCALE GENOMIC DNA]</scope>
    <source>
        <strain>NBRC 101917 / NGR234</strain>
    </source>
</reference>
<reference key="2">
    <citation type="journal article" date="2009" name="Appl. Environ. Microbiol.">
        <title>Rhizobium sp. strain NGR234 possesses a remarkable number of secretion systems.</title>
        <authorList>
            <person name="Schmeisser C."/>
            <person name="Liesegang H."/>
            <person name="Krysciak D."/>
            <person name="Bakkou N."/>
            <person name="Le Quere A."/>
            <person name="Wollherr A."/>
            <person name="Heinemeyer I."/>
            <person name="Morgenstern B."/>
            <person name="Pommerening-Roeser A."/>
            <person name="Flores M."/>
            <person name="Palacios R."/>
            <person name="Brenner S."/>
            <person name="Gottschalk G."/>
            <person name="Schmitz R.A."/>
            <person name="Broughton W.J."/>
            <person name="Perret X."/>
            <person name="Strittmatter A.W."/>
            <person name="Streit W.R."/>
        </authorList>
    </citation>
    <scope>NUCLEOTIDE SEQUENCE [LARGE SCALE GENOMIC DNA]</scope>
    <source>
        <strain>NBRC 101917 / NGR234</strain>
    </source>
</reference>
<dbReference type="EMBL" id="U00090">
    <property type="protein sequence ID" value="AAB91963.1"/>
    <property type="molecule type" value="Genomic_DNA"/>
</dbReference>
<dbReference type="RefSeq" id="NP_444176.1">
    <property type="nucleotide sequence ID" value="NC_000914.2"/>
</dbReference>
<dbReference type="RefSeq" id="WP_010875089.1">
    <property type="nucleotide sequence ID" value="NC_000914.2"/>
</dbReference>
<dbReference type="SMR" id="P55733"/>
<dbReference type="KEGG" id="rhi:NGR_a00470"/>
<dbReference type="eggNOG" id="COG0583">
    <property type="taxonomic scope" value="Bacteria"/>
</dbReference>
<dbReference type="HOGENOM" id="CLU_039613_39_0_5"/>
<dbReference type="OrthoDB" id="528082at2"/>
<dbReference type="Proteomes" id="UP000001054">
    <property type="component" value="Plasmid pNGR234a"/>
</dbReference>
<dbReference type="GO" id="GO:0003677">
    <property type="term" value="F:DNA binding"/>
    <property type="evidence" value="ECO:0007669"/>
    <property type="project" value="UniProtKB-KW"/>
</dbReference>
<dbReference type="GO" id="GO:0003700">
    <property type="term" value="F:DNA-binding transcription factor activity"/>
    <property type="evidence" value="ECO:0007669"/>
    <property type="project" value="InterPro"/>
</dbReference>
<dbReference type="Gene3D" id="3.40.190.10">
    <property type="entry name" value="Periplasmic binding protein-like II"/>
    <property type="match status" value="2"/>
</dbReference>
<dbReference type="Gene3D" id="1.10.10.10">
    <property type="entry name" value="Winged helix-like DNA-binding domain superfamily/Winged helix DNA-binding domain"/>
    <property type="match status" value="1"/>
</dbReference>
<dbReference type="InterPro" id="IPR050389">
    <property type="entry name" value="LysR-type_TF"/>
</dbReference>
<dbReference type="InterPro" id="IPR005119">
    <property type="entry name" value="LysR_subst-bd"/>
</dbReference>
<dbReference type="InterPro" id="IPR000847">
    <property type="entry name" value="Tscrpt_reg_HTH_LysR"/>
</dbReference>
<dbReference type="InterPro" id="IPR036388">
    <property type="entry name" value="WH-like_DNA-bd_sf"/>
</dbReference>
<dbReference type="InterPro" id="IPR036390">
    <property type="entry name" value="WH_DNA-bd_sf"/>
</dbReference>
<dbReference type="PANTHER" id="PTHR30118">
    <property type="entry name" value="HTH-TYPE TRANSCRIPTIONAL REGULATOR LEUO-RELATED"/>
    <property type="match status" value="1"/>
</dbReference>
<dbReference type="PANTHER" id="PTHR30118:SF15">
    <property type="entry name" value="TRANSCRIPTIONAL REGULATORY PROTEIN"/>
    <property type="match status" value="1"/>
</dbReference>
<dbReference type="Pfam" id="PF00126">
    <property type="entry name" value="HTH_1"/>
    <property type="match status" value="1"/>
</dbReference>
<dbReference type="Pfam" id="PF03466">
    <property type="entry name" value="LysR_substrate"/>
    <property type="match status" value="1"/>
</dbReference>
<dbReference type="PRINTS" id="PR00039">
    <property type="entry name" value="HTHLYSR"/>
</dbReference>
<dbReference type="SUPFAM" id="SSF53850">
    <property type="entry name" value="Periplasmic binding protein-like II"/>
    <property type="match status" value="1"/>
</dbReference>
<dbReference type="SUPFAM" id="SSF46785">
    <property type="entry name" value="Winged helix' DNA-binding domain"/>
    <property type="match status" value="1"/>
</dbReference>
<dbReference type="PROSITE" id="PS50931">
    <property type="entry name" value="HTH_LYSR"/>
    <property type="match status" value="1"/>
</dbReference>
<organism>
    <name type="scientific">Sinorhizobium fredii (strain NBRC 101917 / NGR234)</name>
    <dbReference type="NCBI Taxonomy" id="394"/>
    <lineage>
        <taxon>Bacteria</taxon>
        <taxon>Pseudomonadati</taxon>
        <taxon>Pseudomonadota</taxon>
        <taxon>Alphaproteobacteria</taxon>
        <taxon>Hyphomicrobiales</taxon>
        <taxon>Rhizobiaceae</taxon>
        <taxon>Sinorhizobium/Ensifer group</taxon>
        <taxon>Sinorhizobium</taxon>
    </lineage>
</organism>
<name>SYRM2_SINFN</name>
<keyword id="KW-0010">Activator</keyword>
<keyword id="KW-0238">DNA-binding</keyword>
<keyword id="KW-0536">Nodulation</keyword>
<keyword id="KW-0614">Plasmid</keyword>
<keyword id="KW-1185">Reference proteome</keyword>
<keyword id="KW-0804">Transcription</keyword>
<keyword id="KW-0805">Transcription regulation</keyword>
<accession>P55733</accession>
<sequence length="339" mass="37536">MDQPAWKNPRTALIVDGSDAARQRRIPNLASVDLNLLVELEALLQYRNITHAAQHVGRSQPAMSRALSRLRDMFNDDLLVRGSSGLVPTPQAEHLAQMLPSVLNAIRELVSCSSGLRDLRSKVTMAMPDHQSLVLLPYLLPRLGERVPHVDIVTEPLLDGALRRLEQGEIDFAIGQIGAAPPGYLRRGLYADRFTCLLRHDHPALEQEWSVGTFAALRHASIASDSNEGLGQVYDGLVRFGLPGPIVVSNVLTAAVVVAMTDLVLMIPNRVATRVATMLPLAIVDPPVELKPYEVALIWHQRCHHDLEHRVLRREIAAAARMGRLDVSQDQRARRQNDS</sequence>
<feature type="chain" id="PRO_0000105755" description="HTH-type transcriptional regulator SyrM 2">
    <location>
        <begin position="1"/>
        <end position="339"/>
    </location>
</feature>
<feature type="domain" description="HTH lysR-type" evidence="1">
    <location>
        <begin position="32"/>
        <end position="89"/>
    </location>
</feature>
<feature type="DNA-binding region" description="H-T-H motif" evidence="1">
    <location>
        <begin position="49"/>
        <end position="68"/>
    </location>
</feature>
<evidence type="ECO:0000255" key="1">
    <source>
        <dbReference type="PROSITE-ProRule" id="PRU00253"/>
    </source>
</evidence>
<evidence type="ECO:0000305" key="2"/>
<comment type="function">
    <text evidence="2">Acts in trans to stimulate nod gene expression.</text>
</comment>
<comment type="similarity">
    <text evidence="2">Belongs to the LysR transcriptional regulatory family.</text>
</comment>